<comment type="catalytic activity">
    <reaction evidence="1">
        <text>L-histidinol phosphate + 2-oxoglutarate = 3-(imidazol-4-yl)-2-oxopropyl phosphate + L-glutamate</text>
        <dbReference type="Rhea" id="RHEA:23744"/>
        <dbReference type="ChEBI" id="CHEBI:16810"/>
        <dbReference type="ChEBI" id="CHEBI:29985"/>
        <dbReference type="ChEBI" id="CHEBI:57766"/>
        <dbReference type="ChEBI" id="CHEBI:57980"/>
        <dbReference type="EC" id="2.6.1.9"/>
    </reaction>
</comment>
<comment type="cofactor">
    <cofactor evidence="1">
        <name>pyridoxal 5'-phosphate</name>
        <dbReference type="ChEBI" id="CHEBI:597326"/>
    </cofactor>
</comment>
<comment type="pathway">
    <text evidence="1">Amino-acid biosynthesis; L-histidine biosynthesis; L-histidine from 5-phospho-alpha-D-ribose 1-diphosphate: step 7/9.</text>
</comment>
<comment type="subunit">
    <text evidence="1">Homodimer.</text>
</comment>
<comment type="similarity">
    <text evidence="1">Belongs to the class-II pyridoxal-phosphate-dependent aminotransferase family. Histidinol-phosphate aminotransferase subfamily.</text>
</comment>
<gene>
    <name evidence="1" type="primary">hisC</name>
    <name type="ordered locus">Cag_1086</name>
</gene>
<dbReference type="EC" id="2.6.1.9" evidence="1"/>
<dbReference type="EMBL" id="CP000108">
    <property type="protein sequence ID" value="ABB28348.1"/>
    <property type="molecule type" value="Genomic_DNA"/>
</dbReference>
<dbReference type="SMR" id="Q3ARM7"/>
<dbReference type="STRING" id="340177.Cag_1086"/>
<dbReference type="KEGG" id="cch:Cag_1086"/>
<dbReference type="eggNOG" id="COG0079">
    <property type="taxonomic scope" value="Bacteria"/>
</dbReference>
<dbReference type="HOGENOM" id="CLU_017584_3_1_10"/>
<dbReference type="OrthoDB" id="9813612at2"/>
<dbReference type="UniPathway" id="UPA00031">
    <property type="reaction ID" value="UER00012"/>
</dbReference>
<dbReference type="GO" id="GO:0004400">
    <property type="term" value="F:histidinol-phosphate transaminase activity"/>
    <property type="evidence" value="ECO:0007669"/>
    <property type="project" value="UniProtKB-UniRule"/>
</dbReference>
<dbReference type="GO" id="GO:0030170">
    <property type="term" value="F:pyridoxal phosphate binding"/>
    <property type="evidence" value="ECO:0007669"/>
    <property type="project" value="InterPro"/>
</dbReference>
<dbReference type="GO" id="GO:0000105">
    <property type="term" value="P:L-histidine biosynthetic process"/>
    <property type="evidence" value="ECO:0007669"/>
    <property type="project" value="UniProtKB-UniRule"/>
</dbReference>
<dbReference type="CDD" id="cd00609">
    <property type="entry name" value="AAT_like"/>
    <property type="match status" value="1"/>
</dbReference>
<dbReference type="Gene3D" id="3.90.1150.10">
    <property type="entry name" value="Aspartate Aminotransferase, domain 1"/>
    <property type="match status" value="1"/>
</dbReference>
<dbReference type="Gene3D" id="3.40.640.10">
    <property type="entry name" value="Type I PLP-dependent aspartate aminotransferase-like (Major domain)"/>
    <property type="match status" value="1"/>
</dbReference>
<dbReference type="HAMAP" id="MF_01023">
    <property type="entry name" value="HisC_aminotrans_2"/>
    <property type="match status" value="1"/>
</dbReference>
<dbReference type="InterPro" id="IPR001917">
    <property type="entry name" value="Aminotrans_II_pyridoxalP_BS"/>
</dbReference>
<dbReference type="InterPro" id="IPR004839">
    <property type="entry name" value="Aminotransferase_I/II_large"/>
</dbReference>
<dbReference type="InterPro" id="IPR005861">
    <property type="entry name" value="HisP_aminotrans"/>
</dbReference>
<dbReference type="InterPro" id="IPR015424">
    <property type="entry name" value="PyrdxlP-dep_Trfase"/>
</dbReference>
<dbReference type="InterPro" id="IPR015421">
    <property type="entry name" value="PyrdxlP-dep_Trfase_major"/>
</dbReference>
<dbReference type="InterPro" id="IPR015422">
    <property type="entry name" value="PyrdxlP-dep_Trfase_small"/>
</dbReference>
<dbReference type="NCBIfam" id="TIGR01141">
    <property type="entry name" value="hisC"/>
    <property type="match status" value="1"/>
</dbReference>
<dbReference type="PANTHER" id="PTHR42885:SF2">
    <property type="entry name" value="HISTIDINOL-PHOSPHATE AMINOTRANSFERASE"/>
    <property type="match status" value="1"/>
</dbReference>
<dbReference type="PANTHER" id="PTHR42885">
    <property type="entry name" value="HISTIDINOL-PHOSPHATE AMINOTRANSFERASE-RELATED"/>
    <property type="match status" value="1"/>
</dbReference>
<dbReference type="Pfam" id="PF00155">
    <property type="entry name" value="Aminotran_1_2"/>
    <property type="match status" value="1"/>
</dbReference>
<dbReference type="SUPFAM" id="SSF53383">
    <property type="entry name" value="PLP-dependent transferases"/>
    <property type="match status" value="1"/>
</dbReference>
<dbReference type="PROSITE" id="PS00599">
    <property type="entry name" value="AA_TRANSFER_CLASS_2"/>
    <property type="match status" value="1"/>
</dbReference>
<accession>Q3ARM7</accession>
<name>HIS8_CHLCH</name>
<proteinExistence type="inferred from homology"/>
<sequence length="363" mass="40432">MNTPYSIEHLLNPALRNIATYKVEGGQQAEIKLNQNESPFDVPQWLKEEIIGEFIREPWNRYPDILPYRAMEAYANFVGVPAECVIMSNGSNEMLYTIFLACLGPGRKVLIPNPSFSLYEKLALLLQSDIVEVPMKSDLSFDVEAIMKAAHNEAVDVIVLSNPNNPTSTSMSYDAVRKIAESTQALVLVDEAYIEFSRERSMVDTIEELPNVVVLRTMSKALALAGIRIGFALANAPLMAEISKPKIPFASSRLAEITLMKVLANYRLVDEAVSAILSERDALYEQLRMMEGVSPFASDTNFLIVRVADANATFKRLYDKGILVRNVSGYHLMEGCLRCNVGLPEENRRLAEAFAELSVEVKG</sequence>
<feature type="chain" id="PRO_0000230213" description="Histidinol-phosphate aminotransferase">
    <location>
        <begin position="1"/>
        <end position="363"/>
    </location>
</feature>
<feature type="modified residue" description="N6-(pyridoxal phosphate)lysine" evidence="1">
    <location>
        <position position="220"/>
    </location>
</feature>
<organism>
    <name type="scientific">Chlorobium chlorochromatii (strain CaD3)</name>
    <dbReference type="NCBI Taxonomy" id="340177"/>
    <lineage>
        <taxon>Bacteria</taxon>
        <taxon>Pseudomonadati</taxon>
        <taxon>Chlorobiota</taxon>
        <taxon>Chlorobiia</taxon>
        <taxon>Chlorobiales</taxon>
        <taxon>Chlorobiaceae</taxon>
        <taxon>Chlorobium/Pelodictyon group</taxon>
        <taxon>Chlorobium</taxon>
    </lineage>
</organism>
<reference key="1">
    <citation type="submission" date="2005-08" db="EMBL/GenBank/DDBJ databases">
        <title>Complete sequence of Chlorobium chlorochromatii CaD3.</title>
        <authorList>
            <consortium name="US DOE Joint Genome Institute"/>
            <person name="Copeland A."/>
            <person name="Lucas S."/>
            <person name="Lapidus A."/>
            <person name="Barry K."/>
            <person name="Detter J.C."/>
            <person name="Glavina T."/>
            <person name="Hammon N."/>
            <person name="Israni S."/>
            <person name="Pitluck S."/>
            <person name="Bryant D."/>
            <person name="Schmutz J."/>
            <person name="Larimer F."/>
            <person name="Land M."/>
            <person name="Kyrpides N."/>
            <person name="Ivanova N."/>
            <person name="Richardson P."/>
        </authorList>
    </citation>
    <scope>NUCLEOTIDE SEQUENCE [LARGE SCALE GENOMIC DNA]</scope>
    <source>
        <strain>CaD3</strain>
    </source>
</reference>
<evidence type="ECO:0000255" key="1">
    <source>
        <dbReference type="HAMAP-Rule" id="MF_01023"/>
    </source>
</evidence>
<keyword id="KW-0028">Amino-acid biosynthesis</keyword>
<keyword id="KW-0032">Aminotransferase</keyword>
<keyword id="KW-0368">Histidine biosynthesis</keyword>
<keyword id="KW-0663">Pyridoxal phosphate</keyword>
<keyword id="KW-0808">Transferase</keyword>
<protein>
    <recommendedName>
        <fullName evidence="1">Histidinol-phosphate aminotransferase</fullName>
        <ecNumber evidence="1">2.6.1.9</ecNumber>
    </recommendedName>
    <alternativeName>
        <fullName evidence="1">Imidazole acetol-phosphate transaminase</fullName>
    </alternativeName>
</protein>